<name>RS17_ACET2</name>
<dbReference type="EMBL" id="CP000568">
    <property type="protein sequence ID" value="ABN54110.1"/>
    <property type="molecule type" value="Genomic_DNA"/>
</dbReference>
<dbReference type="RefSeq" id="WP_003514641.1">
    <property type="nucleotide sequence ID" value="NC_009012.1"/>
</dbReference>
<dbReference type="SMR" id="A3DJI1"/>
<dbReference type="STRING" id="203119.Cthe_2912"/>
<dbReference type="GeneID" id="35804604"/>
<dbReference type="KEGG" id="cth:Cthe_2912"/>
<dbReference type="eggNOG" id="COG0186">
    <property type="taxonomic scope" value="Bacteria"/>
</dbReference>
<dbReference type="HOGENOM" id="CLU_073626_1_0_9"/>
<dbReference type="OrthoDB" id="9811714at2"/>
<dbReference type="Proteomes" id="UP000002145">
    <property type="component" value="Chromosome"/>
</dbReference>
<dbReference type="GO" id="GO:0022627">
    <property type="term" value="C:cytosolic small ribosomal subunit"/>
    <property type="evidence" value="ECO:0007669"/>
    <property type="project" value="TreeGrafter"/>
</dbReference>
<dbReference type="GO" id="GO:0019843">
    <property type="term" value="F:rRNA binding"/>
    <property type="evidence" value="ECO:0007669"/>
    <property type="project" value="UniProtKB-UniRule"/>
</dbReference>
<dbReference type="GO" id="GO:0003735">
    <property type="term" value="F:structural constituent of ribosome"/>
    <property type="evidence" value="ECO:0007669"/>
    <property type="project" value="InterPro"/>
</dbReference>
<dbReference type="GO" id="GO:0006412">
    <property type="term" value="P:translation"/>
    <property type="evidence" value="ECO:0007669"/>
    <property type="project" value="UniProtKB-UniRule"/>
</dbReference>
<dbReference type="CDD" id="cd00364">
    <property type="entry name" value="Ribosomal_uS17"/>
    <property type="match status" value="1"/>
</dbReference>
<dbReference type="FunFam" id="2.40.50.140:FF:000123">
    <property type="entry name" value="30S ribosomal protein S17"/>
    <property type="match status" value="1"/>
</dbReference>
<dbReference type="Gene3D" id="2.40.50.140">
    <property type="entry name" value="Nucleic acid-binding proteins"/>
    <property type="match status" value="1"/>
</dbReference>
<dbReference type="HAMAP" id="MF_01345_B">
    <property type="entry name" value="Ribosomal_uS17_B"/>
    <property type="match status" value="1"/>
</dbReference>
<dbReference type="InterPro" id="IPR012340">
    <property type="entry name" value="NA-bd_OB-fold"/>
</dbReference>
<dbReference type="InterPro" id="IPR000266">
    <property type="entry name" value="Ribosomal_uS17"/>
</dbReference>
<dbReference type="InterPro" id="IPR019984">
    <property type="entry name" value="Ribosomal_uS17_bact/chlr"/>
</dbReference>
<dbReference type="InterPro" id="IPR019979">
    <property type="entry name" value="Ribosomal_uS17_CS"/>
</dbReference>
<dbReference type="NCBIfam" id="NF004123">
    <property type="entry name" value="PRK05610.1"/>
    <property type="match status" value="1"/>
</dbReference>
<dbReference type="NCBIfam" id="TIGR03635">
    <property type="entry name" value="uS17_bact"/>
    <property type="match status" value="1"/>
</dbReference>
<dbReference type="PANTHER" id="PTHR10744">
    <property type="entry name" value="40S RIBOSOMAL PROTEIN S11 FAMILY MEMBER"/>
    <property type="match status" value="1"/>
</dbReference>
<dbReference type="PANTHER" id="PTHR10744:SF1">
    <property type="entry name" value="SMALL RIBOSOMAL SUBUNIT PROTEIN US17M"/>
    <property type="match status" value="1"/>
</dbReference>
<dbReference type="Pfam" id="PF00366">
    <property type="entry name" value="Ribosomal_S17"/>
    <property type="match status" value="1"/>
</dbReference>
<dbReference type="PRINTS" id="PR00973">
    <property type="entry name" value="RIBOSOMALS17"/>
</dbReference>
<dbReference type="SUPFAM" id="SSF50249">
    <property type="entry name" value="Nucleic acid-binding proteins"/>
    <property type="match status" value="1"/>
</dbReference>
<dbReference type="PROSITE" id="PS00056">
    <property type="entry name" value="RIBOSOMAL_S17"/>
    <property type="match status" value="1"/>
</dbReference>
<protein>
    <recommendedName>
        <fullName evidence="1">Small ribosomal subunit protein uS17</fullName>
    </recommendedName>
    <alternativeName>
        <fullName evidence="2">30S ribosomal protein S17</fullName>
    </alternativeName>
</protein>
<comment type="function">
    <text evidence="1">One of the primary rRNA binding proteins, it binds specifically to the 5'-end of 16S ribosomal RNA.</text>
</comment>
<comment type="subunit">
    <text evidence="1">Part of the 30S ribosomal subunit.</text>
</comment>
<comment type="similarity">
    <text evidence="1">Belongs to the universal ribosomal protein uS17 family.</text>
</comment>
<feature type="chain" id="PRO_1000166473" description="Small ribosomal subunit protein uS17">
    <location>
        <begin position="1"/>
        <end position="85"/>
    </location>
</feature>
<sequence>MAERGLRKVRVGKVTSDKMDKTVVVSIETSEKHPLYKKFVKRTYKLKAHDENNECKIGDIVKVMETRPLSKEKRWRVVEIIERAR</sequence>
<gene>
    <name evidence="1" type="primary">rpsQ</name>
    <name type="ordered locus">Cthe_2912</name>
</gene>
<keyword id="KW-1185">Reference proteome</keyword>
<keyword id="KW-0687">Ribonucleoprotein</keyword>
<keyword id="KW-0689">Ribosomal protein</keyword>
<keyword id="KW-0694">RNA-binding</keyword>
<keyword id="KW-0699">rRNA-binding</keyword>
<evidence type="ECO:0000255" key="1">
    <source>
        <dbReference type="HAMAP-Rule" id="MF_01345"/>
    </source>
</evidence>
<evidence type="ECO:0000305" key="2"/>
<accession>A3DJI1</accession>
<reference key="1">
    <citation type="submission" date="2007-02" db="EMBL/GenBank/DDBJ databases">
        <title>Complete sequence of Clostridium thermocellum ATCC 27405.</title>
        <authorList>
            <consortium name="US DOE Joint Genome Institute"/>
            <person name="Copeland A."/>
            <person name="Lucas S."/>
            <person name="Lapidus A."/>
            <person name="Barry K."/>
            <person name="Detter J.C."/>
            <person name="Glavina del Rio T."/>
            <person name="Hammon N."/>
            <person name="Israni S."/>
            <person name="Dalin E."/>
            <person name="Tice H."/>
            <person name="Pitluck S."/>
            <person name="Chertkov O."/>
            <person name="Brettin T."/>
            <person name="Bruce D."/>
            <person name="Han C."/>
            <person name="Tapia R."/>
            <person name="Gilna P."/>
            <person name="Schmutz J."/>
            <person name="Larimer F."/>
            <person name="Land M."/>
            <person name="Hauser L."/>
            <person name="Kyrpides N."/>
            <person name="Mikhailova N."/>
            <person name="Wu J.H.D."/>
            <person name="Newcomb M."/>
            <person name="Richardson P."/>
        </authorList>
    </citation>
    <scope>NUCLEOTIDE SEQUENCE [LARGE SCALE GENOMIC DNA]</scope>
    <source>
        <strain>ATCC 27405 / DSM 1237 / JCM 9322 / NBRC 103400 / NCIMB 10682 / NRRL B-4536 / VPI 7372</strain>
    </source>
</reference>
<proteinExistence type="inferred from homology"/>
<organism>
    <name type="scientific">Acetivibrio thermocellus (strain ATCC 27405 / DSM 1237 / JCM 9322 / NBRC 103400 / NCIMB 10682 / NRRL B-4536 / VPI 7372)</name>
    <name type="common">Clostridium thermocellum</name>
    <dbReference type="NCBI Taxonomy" id="203119"/>
    <lineage>
        <taxon>Bacteria</taxon>
        <taxon>Bacillati</taxon>
        <taxon>Bacillota</taxon>
        <taxon>Clostridia</taxon>
        <taxon>Eubacteriales</taxon>
        <taxon>Oscillospiraceae</taxon>
        <taxon>Acetivibrio</taxon>
    </lineage>
</organism>